<feature type="signal peptide" evidence="2">
    <location>
        <begin position="1"/>
        <end position="19"/>
    </location>
</feature>
<feature type="chain" id="PRO_0000023978" description="Acid phosphatase">
    <location>
        <begin position="20"/>
        <end position="417"/>
    </location>
</feature>
<feature type="active site" description="Proton donor" evidence="1">
    <location>
        <position position="216"/>
    </location>
</feature>
<feature type="glycosylation site" description="N-linked (GlcNAc...) asparagine" evidence="2">
    <location>
        <position position="122"/>
    </location>
</feature>
<feature type="glycosylation site" description="N-linked (GlcNAc...) asparagine" evidence="2">
    <location>
        <position position="187"/>
    </location>
</feature>
<feature type="glycosylation site" description="N-linked (GlcNAc...) asparagine" evidence="2">
    <location>
        <position position="209"/>
    </location>
</feature>
<feature type="glycosylation site" description="N-linked (GlcNAc...) asparagine" evidence="2">
    <location>
        <position position="218"/>
    </location>
</feature>
<feature type="glycosylation site" description="N-linked (GlcNAc...) asparagine" evidence="2">
    <location>
        <position position="333"/>
    </location>
</feature>
<feature type="glycosylation site" description="N-linked (GlcNAc...) asparagine" evidence="2">
    <location>
        <position position="383"/>
    </location>
</feature>
<comment type="catalytic activity">
    <reaction>
        <text>a phosphate monoester + H2O = an alcohol + phosphate</text>
        <dbReference type="Rhea" id="RHEA:15017"/>
        <dbReference type="ChEBI" id="CHEBI:15377"/>
        <dbReference type="ChEBI" id="CHEBI:30879"/>
        <dbReference type="ChEBI" id="CHEBI:43474"/>
        <dbReference type="ChEBI" id="CHEBI:67140"/>
        <dbReference type="EC" id="3.1.3.2"/>
    </reaction>
</comment>
<comment type="subcellular location">
    <subcellularLocation>
        <location>Secreted</location>
    </subcellularLocation>
</comment>
<comment type="PTM">
    <text>The N-terminus is blocked.</text>
</comment>
<dbReference type="EC" id="3.1.3.2"/>
<dbReference type="EMBL" id="L20566">
    <property type="protein sequence ID" value="AAA62393.1"/>
    <property type="molecule type" value="Genomic_DNA"/>
</dbReference>
<dbReference type="GlyCosmos" id="P34724">
    <property type="glycosylation" value="6 sites, No reported glycans"/>
</dbReference>
<dbReference type="PaxDb" id="5061-CADANGAP00010874"/>
<dbReference type="VEuPathDB" id="FungiDB:An14g01550"/>
<dbReference type="VEuPathDB" id="FungiDB:ASPNIDRAFT2_1115461"/>
<dbReference type="VEuPathDB" id="FungiDB:ATCC64974_1420"/>
<dbReference type="VEuPathDB" id="FungiDB:M747DRAFT_271610"/>
<dbReference type="eggNOG" id="ENOG502QSRP">
    <property type="taxonomic scope" value="Eukaryota"/>
</dbReference>
<dbReference type="GO" id="GO:0005576">
    <property type="term" value="C:extracellular region"/>
    <property type="evidence" value="ECO:0007669"/>
    <property type="project" value="UniProtKB-SubCell"/>
</dbReference>
<dbReference type="GO" id="GO:0003993">
    <property type="term" value="F:acid phosphatase activity"/>
    <property type="evidence" value="ECO:0007669"/>
    <property type="project" value="UniProtKB-EC"/>
</dbReference>
<dbReference type="GO" id="GO:0009395">
    <property type="term" value="P:phospholipid catabolic process"/>
    <property type="evidence" value="ECO:0007669"/>
    <property type="project" value="TreeGrafter"/>
</dbReference>
<dbReference type="FunFam" id="3.40.720.10:FF:000043">
    <property type="entry name" value="Acid phosphatase PHOa"/>
    <property type="match status" value="1"/>
</dbReference>
<dbReference type="Gene3D" id="3.40.720.10">
    <property type="entry name" value="Alkaline Phosphatase, subunit A"/>
    <property type="match status" value="1"/>
</dbReference>
<dbReference type="InterPro" id="IPR017850">
    <property type="entry name" value="Alkaline_phosphatase_core_sf"/>
</dbReference>
<dbReference type="InterPro" id="IPR007312">
    <property type="entry name" value="Phosphoesterase"/>
</dbReference>
<dbReference type="PANTHER" id="PTHR31956">
    <property type="entry name" value="NON-SPECIFIC PHOSPHOLIPASE C4-RELATED"/>
    <property type="match status" value="1"/>
</dbReference>
<dbReference type="PANTHER" id="PTHR31956:SF23">
    <property type="entry name" value="PHOSPHATASE, PUTATIVE (AFU_ORTHOLOGUE AFUA_4G03660)-RELATED"/>
    <property type="match status" value="1"/>
</dbReference>
<dbReference type="Pfam" id="PF04185">
    <property type="entry name" value="Phosphoesterase"/>
    <property type="match status" value="1"/>
</dbReference>
<evidence type="ECO:0000250" key="1"/>
<evidence type="ECO:0000255" key="2"/>
<keyword id="KW-0903">Direct protein sequencing</keyword>
<keyword id="KW-0325">Glycoprotein</keyword>
<keyword id="KW-0378">Hydrolase</keyword>
<keyword id="KW-0964">Secreted</keyword>
<keyword id="KW-0732">Signal</keyword>
<reference key="1">
    <citation type="journal article" date="1994" name="Biochem. Biophys. Res. Commun.">
        <title>An acid phosphatase from Aspergillus ficuum has homology to Penicillium chrysogenum PhoA.</title>
        <authorList>
            <person name="Ehrlich K.C."/>
            <person name="Montalbano B.G."/>
            <person name="Mullaney E.J."/>
            <person name="Dischinger H.C. Jr."/>
            <person name="Ullah A.H.J."/>
        </authorList>
    </citation>
    <scope>NUCLEOTIDE SEQUENCE [GENOMIC DNA]</scope>
    <scope>PARTIAL PROTEIN SEQUENCE</scope>
    <source>
        <strain>NRRL 3135 / Van Tieghem / Ficuum</strain>
    </source>
</reference>
<gene>
    <name type="primary">phoA</name>
</gene>
<protein>
    <recommendedName>
        <fullName>Acid phosphatase</fullName>
        <ecNumber>3.1.3.2</ecNumber>
    </recommendedName>
</protein>
<organism>
    <name type="scientific">Aspergillus niger</name>
    <dbReference type="NCBI Taxonomy" id="5061"/>
    <lineage>
        <taxon>Eukaryota</taxon>
        <taxon>Fungi</taxon>
        <taxon>Dikarya</taxon>
        <taxon>Ascomycota</taxon>
        <taxon>Pezizomycotina</taxon>
        <taxon>Eurotiomycetes</taxon>
        <taxon>Eurotiomycetidae</taxon>
        <taxon>Eurotiales</taxon>
        <taxon>Aspergillaceae</taxon>
        <taxon>Aspergillus</taxon>
        <taxon>Aspergillus subgen. Circumdati</taxon>
    </lineage>
</organism>
<accession>P34724</accession>
<sequence>MFTKQSLVTLLGGLSLAVAQTTTEGYPSLAEIRAAQATVQPYSPVSNVKGLTFNRFVNIWLENTDFDAAAATEHLPVLAKKGLLLNNFWAVTHPSEPNYCRHLPLGDTFGMDNDDFHQIPSNVSTIADLFDTKNIAWGEYQEGLPYPGYQGYRYPESGANDYVRNRNPLILFDSVTEDALRLRQIKNFSSFYDDLENHRLPQYMFITPNMTNDGHDTNITFSGDWTWGFLSELLENDYFTKDTLIMLTFDETGTYEIGNNIYTFLLGGAVPDDLLGTKDDTFYTHYSVIASLSTNWGLPSLGRWDCGANLFSWLAKKTGYVNYEVDTSNLYMNETHWGPLSDDDYSEYYAGWPVPTTDASCSAGNGILSTVKKTYEGLTATFNYTTPFPYDSRSGNNVGVKYSRTLKNGKVESGTSE</sequence>
<proteinExistence type="evidence at protein level"/>
<name>PHOA_ASPNG</name>